<keyword id="KW-0488">Methylation</keyword>
<keyword id="KW-0687">Ribonucleoprotein</keyword>
<keyword id="KW-0689">Ribosomal protein</keyword>
<keyword id="KW-0694">RNA-binding</keyword>
<keyword id="KW-0699">rRNA-binding</keyword>
<dbReference type="EMBL" id="CP000359">
    <property type="protein sequence ID" value="ABF44944.1"/>
    <property type="molecule type" value="Genomic_DNA"/>
</dbReference>
<dbReference type="RefSeq" id="WP_011529785.1">
    <property type="nucleotide sequence ID" value="NC_008025.1"/>
</dbReference>
<dbReference type="SMR" id="Q1J0P0"/>
<dbReference type="STRING" id="319795.Dgeo_0642"/>
<dbReference type="KEGG" id="dge:Dgeo_0642"/>
<dbReference type="eggNOG" id="COG0080">
    <property type="taxonomic scope" value="Bacteria"/>
</dbReference>
<dbReference type="HOGENOM" id="CLU_074237_2_1_0"/>
<dbReference type="Proteomes" id="UP000002431">
    <property type="component" value="Chromosome"/>
</dbReference>
<dbReference type="GO" id="GO:0022625">
    <property type="term" value="C:cytosolic large ribosomal subunit"/>
    <property type="evidence" value="ECO:0007669"/>
    <property type="project" value="TreeGrafter"/>
</dbReference>
<dbReference type="GO" id="GO:0070180">
    <property type="term" value="F:large ribosomal subunit rRNA binding"/>
    <property type="evidence" value="ECO:0007669"/>
    <property type="project" value="UniProtKB-UniRule"/>
</dbReference>
<dbReference type="GO" id="GO:0003735">
    <property type="term" value="F:structural constituent of ribosome"/>
    <property type="evidence" value="ECO:0007669"/>
    <property type="project" value="InterPro"/>
</dbReference>
<dbReference type="GO" id="GO:0006412">
    <property type="term" value="P:translation"/>
    <property type="evidence" value="ECO:0007669"/>
    <property type="project" value="UniProtKB-UniRule"/>
</dbReference>
<dbReference type="CDD" id="cd00349">
    <property type="entry name" value="Ribosomal_L11"/>
    <property type="match status" value="1"/>
</dbReference>
<dbReference type="FunFam" id="1.10.10.250:FF:000001">
    <property type="entry name" value="50S ribosomal protein L11"/>
    <property type="match status" value="1"/>
</dbReference>
<dbReference type="FunFam" id="3.30.1550.10:FF:000001">
    <property type="entry name" value="50S ribosomal protein L11"/>
    <property type="match status" value="1"/>
</dbReference>
<dbReference type="Gene3D" id="1.10.10.250">
    <property type="entry name" value="Ribosomal protein L11, C-terminal domain"/>
    <property type="match status" value="1"/>
</dbReference>
<dbReference type="Gene3D" id="3.30.1550.10">
    <property type="entry name" value="Ribosomal protein L11/L12, N-terminal domain"/>
    <property type="match status" value="1"/>
</dbReference>
<dbReference type="HAMAP" id="MF_00736">
    <property type="entry name" value="Ribosomal_uL11"/>
    <property type="match status" value="1"/>
</dbReference>
<dbReference type="InterPro" id="IPR000911">
    <property type="entry name" value="Ribosomal_uL11"/>
</dbReference>
<dbReference type="InterPro" id="IPR006519">
    <property type="entry name" value="Ribosomal_uL11_bac-typ"/>
</dbReference>
<dbReference type="InterPro" id="IPR020783">
    <property type="entry name" value="Ribosomal_uL11_C"/>
</dbReference>
<dbReference type="InterPro" id="IPR036769">
    <property type="entry name" value="Ribosomal_uL11_C_sf"/>
</dbReference>
<dbReference type="InterPro" id="IPR020785">
    <property type="entry name" value="Ribosomal_uL11_CS"/>
</dbReference>
<dbReference type="InterPro" id="IPR020784">
    <property type="entry name" value="Ribosomal_uL11_N"/>
</dbReference>
<dbReference type="InterPro" id="IPR036796">
    <property type="entry name" value="Ribosomal_uL11_N_sf"/>
</dbReference>
<dbReference type="NCBIfam" id="TIGR01632">
    <property type="entry name" value="L11_bact"/>
    <property type="match status" value="1"/>
</dbReference>
<dbReference type="PANTHER" id="PTHR11661">
    <property type="entry name" value="60S RIBOSOMAL PROTEIN L12"/>
    <property type="match status" value="1"/>
</dbReference>
<dbReference type="PANTHER" id="PTHR11661:SF1">
    <property type="entry name" value="LARGE RIBOSOMAL SUBUNIT PROTEIN UL11M"/>
    <property type="match status" value="1"/>
</dbReference>
<dbReference type="Pfam" id="PF00298">
    <property type="entry name" value="Ribosomal_L11"/>
    <property type="match status" value="1"/>
</dbReference>
<dbReference type="Pfam" id="PF03946">
    <property type="entry name" value="Ribosomal_L11_N"/>
    <property type="match status" value="1"/>
</dbReference>
<dbReference type="SMART" id="SM00649">
    <property type="entry name" value="RL11"/>
    <property type="match status" value="1"/>
</dbReference>
<dbReference type="SUPFAM" id="SSF54747">
    <property type="entry name" value="Ribosomal L11/L12e N-terminal domain"/>
    <property type="match status" value="1"/>
</dbReference>
<dbReference type="SUPFAM" id="SSF46906">
    <property type="entry name" value="Ribosomal protein L11, C-terminal domain"/>
    <property type="match status" value="1"/>
</dbReference>
<dbReference type="PROSITE" id="PS00359">
    <property type="entry name" value="RIBOSOMAL_L11"/>
    <property type="match status" value="1"/>
</dbReference>
<name>RL11_DEIGD</name>
<evidence type="ECO:0000255" key="1">
    <source>
        <dbReference type="HAMAP-Rule" id="MF_00736"/>
    </source>
</evidence>
<evidence type="ECO:0000305" key="2"/>
<proteinExistence type="inferred from homology"/>
<organism>
    <name type="scientific">Deinococcus geothermalis (strain DSM 11300 / CIP 105573 / AG-3a)</name>
    <dbReference type="NCBI Taxonomy" id="319795"/>
    <lineage>
        <taxon>Bacteria</taxon>
        <taxon>Thermotogati</taxon>
        <taxon>Deinococcota</taxon>
        <taxon>Deinococci</taxon>
        <taxon>Deinococcales</taxon>
        <taxon>Deinococcaceae</taxon>
        <taxon>Deinococcus</taxon>
    </lineage>
</organism>
<protein>
    <recommendedName>
        <fullName evidence="1">Large ribosomal subunit protein uL11</fullName>
    </recommendedName>
    <alternativeName>
        <fullName evidence="2">50S ribosomal protein L11</fullName>
    </alternativeName>
</protein>
<accession>Q1J0P0</accession>
<gene>
    <name evidence="1" type="primary">rplK</name>
    <name type="ordered locus">Dgeo_0642</name>
</gene>
<reference key="1">
    <citation type="submission" date="2006-04" db="EMBL/GenBank/DDBJ databases">
        <title>Complete sequence of chromosome of Deinococcus geothermalis DSM 11300.</title>
        <authorList>
            <person name="Copeland A."/>
            <person name="Lucas S."/>
            <person name="Lapidus A."/>
            <person name="Barry K."/>
            <person name="Detter J.C."/>
            <person name="Glavina del Rio T."/>
            <person name="Hammon N."/>
            <person name="Israni S."/>
            <person name="Dalin E."/>
            <person name="Tice H."/>
            <person name="Pitluck S."/>
            <person name="Brettin T."/>
            <person name="Bruce D."/>
            <person name="Han C."/>
            <person name="Tapia R."/>
            <person name="Saunders E."/>
            <person name="Gilna P."/>
            <person name="Schmutz J."/>
            <person name="Larimer F."/>
            <person name="Land M."/>
            <person name="Hauser L."/>
            <person name="Kyrpides N."/>
            <person name="Kim E."/>
            <person name="Daly M.J."/>
            <person name="Fredrickson J.K."/>
            <person name="Makarova K.S."/>
            <person name="Gaidamakova E.K."/>
            <person name="Zhai M."/>
            <person name="Richardson P."/>
        </authorList>
    </citation>
    <scope>NUCLEOTIDE SEQUENCE [LARGE SCALE GENOMIC DNA]</scope>
    <source>
        <strain>DSM 11300 / CIP 105573 / AG-3a</strain>
    </source>
</reference>
<comment type="function">
    <text evidence="1">Forms part of the ribosomal stalk which helps the ribosome interact with GTP-bound translation factors.</text>
</comment>
<comment type="subunit">
    <text evidence="1">Part of the ribosomal stalk of the 50S ribosomal subunit. Interacts with L10 and the large rRNA to form the base of the stalk. L10 forms an elongated spine to which L12 dimers bind in a sequential fashion forming a multimeric L10(L12)X complex.</text>
</comment>
<comment type="PTM">
    <text evidence="1">One or more lysine residues are methylated.</text>
</comment>
<comment type="similarity">
    <text evidence="1">Belongs to the universal ribosomal protein uL11 family.</text>
</comment>
<sequence length="144" mass="15020">MKKVAGLVKLQLPAGKATPAPPVGPALGQYGANIMEFTKAFNAQTADKGDAIIPVEITIYADRSFTFITKTPPMSYLIRKAAGLQKGSATPNKAKVGKLNWEQVLEIARTKMPDLNAGSVEAAANTVAGTARSMGVTIEGAPHA</sequence>
<feature type="chain" id="PRO_0000258149" description="Large ribosomal subunit protein uL11">
    <location>
        <begin position="1"/>
        <end position="144"/>
    </location>
</feature>